<keyword id="KW-0030">Aminoacyl-tRNA synthetase</keyword>
<keyword id="KW-0067">ATP-binding</keyword>
<keyword id="KW-0963">Cytoplasm</keyword>
<keyword id="KW-0436">Ligase</keyword>
<keyword id="KW-0547">Nucleotide-binding</keyword>
<keyword id="KW-0648">Protein biosynthesis</keyword>
<dbReference type="EC" id="6.1.1.15" evidence="1"/>
<dbReference type="EMBL" id="CP001400">
    <property type="protein sequence ID" value="ACP38310.1"/>
    <property type="molecule type" value="Genomic_DNA"/>
</dbReference>
<dbReference type="RefSeq" id="WP_012711554.1">
    <property type="nucleotide sequence ID" value="NC_012588.1"/>
</dbReference>
<dbReference type="SMR" id="C3MW88"/>
<dbReference type="GeneID" id="84053160"/>
<dbReference type="KEGG" id="sia:M1425_1561"/>
<dbReference type="HOGENOM" id="CLU_001882_4_2_2"/>
<dbReference type="Proteomes" id="UP000001350">
    <property type="component" value="Chromosome"/>
</dbReference>
<dbReference type="GO" id="GO:0017101">
    <property type="term" value="C:aminoacyl-tRNA synthetase multienzyme complex"/>
    <property type="evidence" value="ECO:0007669"/>
    <property type="project" value="TreeGrafter"/>
</dbReference>
<dbReference type="GO" id="GO:0005737">
    <property type="term" value="C:cytoplasm"/>
    <property type="evidence" value="ECO:0007669"/>
    <property type="project" value="UniProtKB-SubCell"/>
</dbReference>
<dbReference type="GO" id="GO:0005524">
    <property type="term" value="F:ATP binding"/>
    <property type="evidence" value="ECO:0007669"/>
    <property type="project" value="UniProtKB-UniRule"/>
</dbReference>
<dbReference type="GO" id="GO:0004827">
    <property type="term" value="F:proline-tRNA ligase activity"/>
    <property type="evidence" value="ECO:0007669"/>
    <property type="project" value="UniProtKB-UniRule"/>
</dbReference>
<dbReference type="GO" id="GO:0006433">
    <property type="term" value="P:prolyl-tRNA aminoacylation"/>
    <property type="evidence" value="ECO:0007669"/>
    <property type="project" value="UniProtKB-UniRule"/>
</dbReference>
<dbReference type="CDD" id="cd00862">
    <property type="entry name" value="ProRS_anticodon_zinc"/>
    <property type="match status" value="1"/>
</dbReference>
<dbReference type="CDD" id="cd00778">
    <property type="entry name" value="ProRS_core_arch_euk"/>
    <property type="match status" value="1"/>
</dbReference>
<dbReference type="FunFam" id="3.40.50.800:FF:000005">
    <property type="entry name" value="bifunctional glutamate/proline--tRNA ligase"/>
    <property type="match status" value="1"/>
</dbReference>
<dbReference type="FunFam" id="3.30.930.10:FF:000037">
    <property type="entry name" value="Proline--tRNA ligase"/>
    <property type="match status" value="1"/>
</dbReference>
<dbReference type="Gene3D" id="3.40.50.800">
    <property type="entry name" value="Anticodon-binding domain"/>
    <property type="match status" value="1"/>
</dbReference>
<dbReference type="Gene3D" id="3.30.930.10">
    <property type="entry name" value="Bira Bifunctional Protein, Domain 2"/>
    <property type="match status" value="1"/>
</dbReference>
<dbReference type="Gene3D" id="3.30.110.30">
    <property type="entry name" value="C-terminal domain of ProRS"/>
    <property type="match status" value="1"/>
</dbReference>
<dbReference type="HAMAP" id="MF_01571">
    <property type="entry name" value="Pro_tRNA_synth_type3"/>
    <property type="match status" value="1"/>
</dbReference>
<dbReference type="InterPro" id="IPR002314">
    <property type="entry name" value="aa-tRNA-synt_IIb"/>
</dbReference>
<dbReference type="InterPro" id="IPR006195">
    <property type="entry name" value="aa-tRNA-synth_II"/>
</dbReference>
<dbReference type="InterPro" id="IPR045864">
    <property type="entry name" value="aa-tRNA-synth_II/BPL/LPL"/>
</dbReference>
<dbReference type="InterPro" id="IPR004154">
    <property type="entry name" value="Anticodon-bd"/>
</dbReference>
<dbReference type="InterPro" id="IPR036621">
    <property type="entry name" value="Anticodon-bd_dom_sf"/>
</dbReference>
<dbReference type="InterPro" id="IPR002316">
    <property type="entry name" value="Pro-tRNA-ligase_IIa"/>
</dbReference>
<dbReference type="InterPro" id="IPR004499">
    <property type="entry name" value="Pro-tRNA-ligase_IIa_arc-type"/>
</dbReference>
<dbReference type="InterPro" id="IPR016061">
    <property type="entry name" value="Pro-tRNA_ligase_II_C"/>
</dbReference>
<dbReference type="InterPro" id="IPR017449">
    <property type="entry name" value="Pro-tRNA_synth_II"/>
</dbReference>
<dbReference type="InterPro" id="IPR033721">
    <property type="entry name" value="ProRS_core_arch_euk"/>
</dbReference>
<dbReference type="NCBIfam" id="TIGR00408">
    <property type="entry name" value="proS_fam_I"/>
    <property type="match status" value="1"/>
</dbReference>
<dbReference type="PANTHER" id="PTHR43382:SF2">
    <property type="entry name" value="BIFUNCTIONAL GLUTAMATE_PROLINE--TRNA LIGASE"/>
    <property type="match status" value="1"/>
</dbReference>
<dbReference type="PANTHER" id="PTHR43382">
    <property type="entry name" value="PROLYL-TRNA SYNTHETASE"/>
    <property type="match status" value="1"/>
</dbReference>
<dbReference type="Pfam" id="PF03129">
    <property type="entry name" value="HGTP_anticodon"/>
    <property type="match status" value="1"/>
</dbReference>
<dbReference type="Pfam" id="PF09180">
    <property type="entry name" value="ProRS-C_1"/>
    <property type="match status" value="1"/>
</dbReference>
<dbReference type="Pfam" id="PF00587">
    <property type="entry name" value="tRNA-synt_2b"/>
    <property type="match status" value="1"/>
</dbReference>
<dbReference type="PRINTS" id="PR01046">
    <property type="entry name" value="TRNASYNTHPRO"/>
</dbReference>
<dbReference type="SMART" id="SM00946">
    <property type="entry name" value="ProRS-C_1"/>
    <property type="match status" value="1"/>
</dbReference>
<dbReference type="SUPFAM" id="SSF64586">
    <property type="entry name" value="C-terminal domain of ProRS"/>
    <property type="match status" value="1"/>
</dbReference>
<dbReference type="SUPFAM" id="SSF52954">
    <property type="entry name" value="Class II aaRS ABD-related"/>
    <property type="match status" value="1"/>
</dbReference>
<dbReference type="SUPFAM" id="SSF55681">
    <property type="entry name" value="Class II aaRS and biotin synthetases"/>
    <property type="match status" value="1"/>
</dbReference>
<dbReference type="PROSITE" id="PS50862">
    <property type="entry name" value="AA_TRNA_LIGASE_II"/>
    <property type="match status" value="1"/>
</dbReference>
<organism>
    <name type="scientific">Saccharolobus islandicus (strain M.14.25 / Kamchatka #1)</name>
    <name type="common">Sulfolobus islandicus</name>
    <dbReference type="NCBI Taxonomy" id="427317"/>
    <lineage>
        <taxon>Archaea</taxon>
        <taxon>Thermoproteota</taxon>
        <taxon>Thermoprotei</taxon>
        <taxon>Sulfolobales</taxon>
        <taxon>Sulfolobaceae</taxon>
        <taxon>Saccharolobus</taxon>
    </lineage>
</organism>
<protein>
    <recommendedName>
        <fullName evidence="1">Proline--tRNA ligase</fullName>
        <ecNumber evidence="1">6.1.1.15</ecNumber>
    </recommendedName>
    <alternativeName>
        <fullName evidence="1">Prolyl-tRNA synthetase</fullName>
        <shortName evidence="1">ProRS</shortName>
    </alternativeName>
</protein>
<name>SYP_SACI4</name>
<sequence>MQITREKWSKNFSEWFDWVLREGEFYDYGRYPVKGMGVWMPYGFKLRQNIISIIRNLLDSTGHEEVLFPLLIPEDLLSRESTHIKGFEEEVFWVTKGGSEDLDVKLALRPTSEVAITTMENLWLKSYKQLPKKYYQIVSVFRYETKATRPMIRLREITTFKEAHTVHETYDDAQRQVEEAIEIYKKIFNNLAIPYVLSERPEWDRFAGALHTYAFDTIMPDGKVMQIGTVHHLGQNFSRALDFKIQKKDGSLDYPHQTSYGISDRAIASVIAIHGDDHGPILPPSVAPIKVVVVPIPAKNEEGTQQVMKYSVEICEMLNKNNITCVTDQDTEKTPGEKFYIWEIKGVPIRLEIGPRELASSTVFIKRRDNLKSYTVKKEEVVNKVKEVLNEIQEDLRKRAWESLKSRIEYANDIEKAKNLLENNSGIVEVPWCGSKECGLKIEELTNARVLGYPIEDRKVNDKCVICKMNAKTVLRVAKTY</sequence>
<proteinExistence type="inferred from homology"/>
<feature type="chain" id="PRO_1000215578" description="Proline--tRNA ligase">
    <location>
        <begin position="1"/>
        <end position="481"/>
    </location>
</feature>
<gene>
    <name evidence="1" type="primary">proS</name>
    <name type="ordered locus">M1425_1561</name>
</gene>
<comment type="function">
    <text evidence="1">Catalyzes the attachment of proline to tRNA(Pro) in a two-step reaction: proline is first activated by ATP to form Pro-AMP and then transferred to the acceptor end of tRNA(Pro).</text>
</comment>
<comment type="catalytic activity">
    <reaction evidence="1">
        <text>tRNA(Pro) + L-proline + ATP = L-prolyl-tRNA(Pro) + AMP + diphosphate</text>
        <dbReference type="Rhea" id="RHEA:14305"/>
        <dbReference type="Rhea" id="RHEA-COMP:9700"/>
        <dbReference type="Rhea" id="RHEA-COMP:9702"/>
        <dbReference type="ChEBI" id="CHEBI:30616"/>
        <dbReference type="ChEBI" id="CHEBI:33019"/>
        <dbReference type="ChEBI" id="CHEBI:60039"/>
        <dbReference type="ChEBI" id="CHEBI:78442"/>
        <dbReference type="ChEBI" id="CHEBI:78532"/>
        <dbReference type="ChEBI" id="CHEBI:456215"/>
        <dbReference type="EC" id="6.1.1.15"/>
    </reaction>
</comment>
<comment type="subunit">
    <text evidence="1">Homodimer.</text>
</comment>
<comment type="subcellular location">
    <subcellularLocation>
        <location evidence="1">Cytoplasm</location>
    </subcellularLocation>
</comment>
<comment type="domain">
    <text evidence="1">Consists of three domains: the N-terminal catalytic domain, the anticodon-binding domain and the C-terminal extension.</text>
</comment>
<comment type="similarity">
    <text evidence="1">Belongs to the class-II aminoacyl-tRNA synthetase family. ProS type 3 subfamily.</text>
</comment>
<reference key="1">
    <citation type="journal article" date="2009" name="Proc. Natl. Acad. Sci. U.S.A.">
        <title>Biogeography of the Sulfolobus islandicus pan-genome.</title>
        <authorList>
            <person name="Reno M.L."/>
            <person name="Held N.L."/>
            <person name="Fields C.J."/>
            <person name="Burke P.V."/>
            <person name="Whitaker R.J."/>
        </authorList>
    </citation>
    <scope>NUCLEOTIDE SEQUENCE [LARGE SCALE GENOMIC DNA]</scope>
    <source>
        <strain>M.14.25 / Kamchatka #1</strain>
    </source>
</reference>
<evidence type="ECO:0000255" key="1">
    <source>
        <dbReference type="HAMAP-Rule" id="MF_01571"/>
    </source>
</evidence>
<accession>C3MW88</accession>